<feature type="chain" id="PRO_1000018886" description="Bifunctional purine biosynthesis protein PurH">
    <location>
        <begin position="1"/>
        <end position="529"/>
    </location>
</feature>
<feature type="domain" description="MGS-like" evidence="2">
    <location>
        <begin position="1"/>
        <end position="148"/>
    </location>
</feature>
<feature type="modified residue" description="N6-acetyllysine" evidence="1">
    <location>
        <position position="287"/>
    </location>
</feature>
<sequence>MQQRRPVRRALLSVSDKAGIVEFAQALSARGVELLSTGGTARLLAEKGLPVTEVSDYTGFPEMMDGRVKTLHPKVHGGILGRRGQDDTIMEEHQIQPIDMVVVNLYPFAQTVAREGCSLEDAVENIDIGGPTMVRSAAKNHKDVAIVVKSSDYDAIIKEIDANEGSLTLETRFDLAIKAFEHTAAYDSMIANYFGSMVPAYHGESKEAAGRFPRTLNLNFIKKQDMRYGENSHQQAAFYIEENVKEASVATATQVQGKALSYNNIADTDAALECVKEFAEPACVIVKHANPCGVAIGNSILDAYDRAYKTDPTSAFGGIIAFNRELDAETAQAIISRQFVEVIIAPSASEEALKITAAKQNVRVLTCGQWGERVPGLDFKRVNGGLLVQDRDLGMVGAEELRVVTKRQPTEQELRDALFCWKVAKFVKSNAIVYAKNNMTIGIGAGQMSRVYSAKIAGIKAADEGLEVKGSSMASDAFFPFRDGIDAAAAAGVTCVIQPGGSIRDDEVIAAADEHGIAMLFTDMRHFRH</sequence>
<protein>
    <recommendedName>
        <fullName evidence="1">Bifunctional purine biosynthesis protein PurH</fullName>
    </recommendedName>
    <domain>
        <recommendedName>
            <fullName evidence="1">Phosphoribosylaminoimidazolecarboxamide formyltransferase</fullName>
            <ecNumber evidence="1">2.1.2.3</ecNumber>
        </recommendedName>
        <alternativeName>
            <fullName evidence="1">AICAR transformylase</fullName>
        </alternativeName>
    </domain>
    <domain>
        <recommendedName>
            <fullName evidence="1">IMP cyclohydrolase</fullName>
            <ecNumber evidence="1">3.5.4.10</ecNumber>
        </recommendedName>
        <alternativeName>
            <fullName evidence="1">ATIC</fullName>
        </alternativeName>
        <alternativeName>
            <fullName evidence="1">IMP synthase</fullName>
        </alternativeName>
        <alternativeName>
            <fullName evidence="1">Inosinicase</fullName>
        </alternativeName>
    </domain>
</protein>
<dbReference type="EC" id="2.1.2.3" evidence="1"/>
<dbReference type="EC" id="3.5.4.10" evidence="1"/>
<dbReference type="EMBL" id="CP000468">
    <property type="protein sequence ID" value="ABJ03467.1"/>
    <property type="molecule type" value="Genomic_DNA"/>
</dbReference>
<dbReference type="RefSeq" id="WP_001187584.1">
    <property type="nucleotide sequence ID" value="NZ_CADILS010000053.1"/>
</dbReference>
<dbReference type="SMR" id="A1AIH7"/>
<dbReference type="KEGG" id="ecv:APECO1_2469"/>
<dbReference type="HOGENOM" id="CLU_016316_5_2_6"/>
<dbReference type="UniPathway" id="UPA00074">
    <property type="reaction ID" value="UER00133"/>
</dbReference>
<dbReference type="UniPathway" id="UPA00074">
    <property type="reaction ID" value="UER00135"/>
</dbReference>
<dbReference type="Proteomes" id="UP000008216">
    <property type="component" value="Chromosome"/>
</dbReference>
<dbReference type="GO" id="GO:0005829">
    <property type="term" value="C:cytosol"/>
    <property type="evidence" value="ECO:0007669"/>
    <property type="project" value="TreeGrafter"/>
</dbReference>
<dbReference type="GO" id="GO:0003937">
    <property type="term" value="F:IMP cyclohydrolase activity"/>
    <property type="evidence" value="ECO:0007669"/>
    <property type="project" value="UniProtKB-UniRule"/>
</dbReference>
<dbReference type="GO" id="GO:0004643">
    <property type="term" value="F:phosphoribosylaminoimidazolecarboxamide formyltransferase activity"/>
    <property type="evidence" value="ECO:0007669"/>
    <property type="project" value="UniProtKB-UniRule"/>
</dbReference>
<dbReference type="GO" id="GO:0006189">
    <property type="term" value="P:'de novo' IMP biosynthetic process"/>
    <property type="evidence" value="ECO:0007669"/>
    <property type="project" value="UniProtKB-UniRule"/>
</dbReference>
<dbReference type="CDD" id="cd01421">
    <property type="entry name" value="IMPCH"/>
    <property type="match status" value="1"/>
</dbReference>
<dbReference type="FunFam" id="3.40.140.20:FF:000001">
    <property type="entry name" value="Bifunctional purine biosynthesis protein PurH"/>
    <property type="match status" value="1"/>
</dbReference>
<dbReference type="FunFam" id="3.40.140.20:FF:000002">
    <property type="entry name" value="Bifunctional purine biosynthesis protein PurH"/>
    <property type="match status" value="1"/>
</dbReference>
<dbReference type="FunFam" id="3.40.50.1380:FF:000001">
    <property type="entry name" value="Bifunctional purine biosynthesis protein PurH"/>
    <property type="match status" value="1"/>
</dbReference>
<dbReference type="Gene3D" id="3.40.140.20">
    <property type="match status" value="2"/>
</dbReference>
<dbReference type="Gene3D" id="3.40.50.1380">
    <property type="entry name" value="Methylglyoxal synthase-like domain"/>
    <property type="match status" value="1"/>
</dbReference>
<dbReference type="HAMAP" id="MF_00139">
    <property type="entry name" value="PurH"/>
    <property type="match status" value="1"/>
</dbReference>
<dbReference type="InterPro" id="IPR024051">
    <property type="entry name" value="AICAR_Tfase_dup_dom_sf"/>
</dbReference>
<dbReference type="InterPro" id="IPR016193">
    <property type="entry name" value="Cytidine_deaminase-like"/>
</dbReference>
<dbReference type="InterPro" id="IPR011607">
    <property type="entry name" value="MGS-like_dom"/>
</dbReference>
<dbReference type="InterPro" id="IPR036914">
    <property type="entry name" value="MGS-like_dom_sf"/>
</dbReference>
<dbReference type="InterPro" id="IPR002695">
    <property type="entry name" value="PurH-like"/>
</dbReference>
<dbReference type="NCBIfam" id="NF002049">
    <property type="entry name" value="PRK00881.1"/>
    <property type="match status" value="1"/>
</dbReference>
<dbReference type="NCBIfam" id="TIGR00355">
    <property type="entry name" value="purH"/>
    <property type="match status" value="1"/>
</dbReference>
<dbReference type="PANTHER" id="PTHR11692:SF0">
    <property type="entry name" value="BIFUNCTIONAL PURINE BIOSYNTHESIS PROTEIN ATIC"/>
    <property type="match status" value="1"/>
</dbReference>
<dbReference type="PANTHER" id="PTHR11692">
    <property type="entry name" value="BIFUNCTIONAL PURINE BIOSYNTHESIS PROTEIN PURH"/>
    <property type="match status" value="1"/>
</dbReference>
<dbReference type="Pfam" id="PF01808">
    <property type="entry name" value="AICARFT_IMPCHas"/>
    <property type="match status" value="1"/>
</dbReference>
<dbReference type="Pfam" id="PF02142">
    <property type="entry name" value="MGS"/>
    <property type="match status" value="1"/>
</dbReference>
<dbReference type="PIRSF" id="PIRSF000414">
    <property type="entry name" value="AICARFT_IMPCHas"/>
    <property type="match status" value="1"/>
</dbReference>
<dbReference type="SMART" id="SM00798">
    <property type="entry name" value="AICARFT_IMPCHas"/>
    <property type="match status" value="1"/>
</dbReference>
<dbReference type="SMART" id="SM00851">
    <property type="entry name" value="MGS"/>
    <property type="match status" value="1"/>
</dbReference>
<dbReference type="SUPFAM" id="SSF53927">
    <property type="entry name" value="Cytidine deaminase-like"/>
    <property type="match status" value="1"/>
</dbReference>
<dbReference type="SUPFAM" id="SSF52335">
    <property type="entry name" value="Methylglyoxal synthase-like"/>
    <property type="match status" value="1"/>
</dbReference>
<dbReference type="PROSITE" id="PS51855">
    <property type="entry name" value="MGS"/>
    <property type="match status" value="1"/>
</dbReference>
<proteinExistence type="inferred from homology"/>
<keyword id="KW-0007">Acetylation</keyword>
<keyword id="KW-0378">Hydrolase</keyword>
<keyword id="KW-0511">Multifunctional enzyme</keyword>
<keyword id="KW-0658">Purine biosynthesis</keyword>
<keyword id="KW-1185">Reference proteome</keyword>
<keyword id="KW-0808">Transferase</keyword>
<accession>A1AIH7</accession>
<organism>
    <name type="scientific">Escherichia coli O1:K1 / APEC</name>
    <dbReference type="NCBI Taxonomy" id="405955"/>
    <lineage>
        <taxon>Bacteria</taxon>
        <taxon>Pseudomonadati</taxon>
        <taxon>Pseudomonadota</taxon>
        <taxon>Gammaproteobacteria</taxon>
        <taxon>Enterobacterales</taxon>
        <taxon>Enterobacteriaceae</taxon>
        <taxon>Escherichia</taxon>
    </lineage>
</organism>
<reference key="1">
    <citation type="journal article" date="2007" name="J. Bacteriol.">
        <title>The genome sequence of avian pathogenic Escherichia coli strain O1:K1:H7 shares strong similarities with human extraintestinal pathogenic E. coli genomes.</title>
        <authorList>
            <person name="Johnson T.J."/>
            <person name="Kariyawasam S."/>
            <person name="Wannemuehler Y."/>
            <person name="Mangiamele P."/>
            <person name="Johnson S.J."/>
            <person name="Doetkott C."/>
            <person name="Skyberg J.A."/>
            <person name="Lynne A.M."/>
            <person name="Johnson J.R."/>
            <person name="Nolan L.K."/>
        </authorList>
    </citation>
    <scope>NUCLEOTIDE SEQUENCE [LARGE SCALE GENOMIC DNA]</scope>
</reference>
<name>PUR9_ECOK1</name>
<evidence type="ECO:0000255" key="1">
    <source>
        <dbReference type="HAMAP-Rule" id="MF_00139"/>
    </source>
</evidence>
<evidence type="ECO:0000255" key="2">
    <source>
        <dbReference type="PROSITE-ProRule" id="PRU01202"/>
    </source>
</evidence>
<comment type="catalytic activity">
    <reaction evidence="1">
        <text>(6R)-10-formyltetrahydrofolate + 5-amino-1-(5-phospho-beta-D-ribosyl)imidazole-4-carboxamide = 5-formamido-1-(5-phospho-D-ribosyl)imidazole-4-carboxamide + (6S)-5,6,7,8-tetrahydrofolate</text>
        <dbReference type="Rhea" id="RHEA:22192"/>
        <dbReference type="ChEBI" id="CHEBI:57453"/>
        <dbReference type="ChEBI" id="CHEBI:58467"/>
        <dbReference type="ChEBI" id="CHEBI:58475"/>
        <dbReference type="ChEBI" id="CHEBI:195366"/>
        <dbReference type="EC" id="2.1.2.3"/>
    </reaction>
</comment>
<comment type="catalytic activity">
    <reaction evidence="1">
        <text>IMP + H2O = 5-formamido-1-(5-phospho-D-ribosyl)imidazole-4-carboxamide</text>
        <dbReference type="Rhea" id="RHEA:18445"/>
        <dbReference type="ChEBI" id="CHEBI:15377"/>
        <dbReference type="ChEBI" id="CHEBI:58053"/>
        <dbReference type="ChEBI" id="CHEBI:58467"/>
        <dbReference type="EC" id="3.5.4.10"/>
    </reaction>
</comment>
<comment type="pathway">
    <text evidence="1">Purine metabolism; IMP biosynthesis via de novo pathway; 5-formamido-1-(5-phospho-D-ribosyl)imidazole-4-carboxamide from 5-amino-1-(5-phospho-D-ribosyl)imidazole-4-carboxamide (10-formyl THF route): step 1/1.</text>
</comment>
<comment type="pathway">
    <text evidence="1">Purine metabolism; IMP biosynthesis via de novo pathway; IMP from 5-formamido-1-(5-phospho-D-ribosyl)imidazole-4-carboxamide: step 1/1.</text>
</comment>
<comment type="domain">
    <text evidence="1">The IMP cyclohydrolase activity resides in the N-terminal region.</text>
</comment>
<comment type="similarity">
    <text evidence="1">Belongs to the PurH family.</text>
</comment>
<gene>
    <name evidence="1" type="primary">purH</name>
    <name type="ordered locus">Ecok1_39730</name>
    <name type="ORF">APECO1_2469</name>
</gene>